<protein>
    <recommendedName>
        <fullName evidence="1">Methylthioribulose-1-phosphate dehydratase</fullName>
        <shortName evidence="1">MTRu-1-P dehydratase</shortName>
        <ecNumber evidence="1">4.2.1.109</ecNumber>
    </recommendedName>
</protein>
<accession>A8GAA8</accession>
<proteinExistence type="inferred from homology"/>
<gene>
    <name evidence="1" type="primary">mtnB</name>
    <name type="ordered locus">Spro_0942</name>
</gene>
<evidence type="ECO:0000255" key="1">
    <source>
        <dbReference type="HAMAP-Rule" id="MF_01677"/>
    </source>
</evidence>
<evidence type="ECO:0000305" key="2"/>
<reference key="1">
    <citation type="submission" date="2007-09" db="EMBL/GenBank/DDBJ databases">
        <title>Complete sequence of chromosome of Serratia proteamaculans 568.</title>
        <authorList>
            <consortium name="US DOE Joint Genome Institute"/>
            <person name="Copeland A."/>
            <person name="Lucas S."/>
            <person name="Lapidus A."/>
            <person name="Barry K."/>
            <person name="Glavina del Rio T."/>
            <person name="Dalin E."/>
            <person name="Tice H."/>
            <person name="Pitluck S."/>
            <person name="Chain P."/>
            <person name="Malfatti S."/>
            <person name="Shin M."/>
            <person name="Vergez L."/>
            <person name="Schmutz J."/>
            <person name="Larimer F."/>
            <person name="Land M."/>
            <person name="Hauser L."/>
            <person name="Kyrpides N."/>
            <person name="Kim E."/>
            <person name="Taghavi S."/>
            <person name="Newman L."/>
            <person name="Vangronsveld J."/>
            <person name="van der Lelie D."/>
            <person name="Richardson P."/>
        </authorList>
    </citation>
    <scope>NUCLEOTIDE SEQUENCE [LARGE SCALE GENOMIC DNA]</scope>
    <source>
        <strain>568</strain>
    </source>
</reference>
<keyword id="KW-0028">Amino-acid biosynthesis</keyword>
<keyword id="KW-0456">Lyase</keyword>
<keyword id="KW-0479">Metal-binding</keyword>
<keyword id="KW-0486">Methionine biosynthesis</keyword>
<keyword id="KW-0862">Zinc</keyword>
<feature type="chain" id="PRO_0000357104" description="Methylthioribulose-1-phosphate dehydratase">
    <location>
        <begin position="1"/>
        <end position="204"/>
    </location>
</feature>
<feature type="binding site" evidence="1">
    <location>
        <position position="94"/>
    </location>
    <ligand>
        <name>Zn(2+)</name>
        <dbReference type="ChEBI" id="CHEBI:29105"/>
    </ligand>
</feature>
<feature type="binding site" evidence="1">
    <location>
        <position position="96"/>
    </location>
    <ligand>
        <name>Zn(2+)</name>
        <dbReference type="ChEBI" id="CHEBI:29105"/>
    </ligand>
</feature>
<name>MTNB_SERP5</name>
<organism>
    <name type="scientific">Serratia proteamaculans (strain 568)</name>
    <dbReference type="NCBI Taxonomy" id="399741"/>
    <lineage>
        <taxon>Bacteria</taxon>
        <taxon>Pseudomonadati</taxon>
        <taxon>Pseudomonadota</taxon>
        <taxon>Gammaproteobacteria</taxon>
        <taxon>Enterobacterales</taxon>
        <taxon>Yersiniaceae</taxon>
        <taxon>Serratia</taxon>
    </lineage>
</organism>
<sequence>MTENQQLKALLSACHWIGEKGWCPATGGNMSLRLDDQHCLVTESGKDKGSLTETDFLLVETASNHVPSGRTPSAETGLHTLIYRLYPQIGAVLHTHSVNATVLSRVERSDGLVLQGYEMQKSLGGQTTHLDSVVIPIFDNDQDISRLAARVAAHAEATPLQYGFLVRGHGLYCWGRQVAEARRHLEGLEFLFQCELQRRLLEAK</sequence>
<comment type="function">
    <text evidence="1">Catalyzes the dehydration of methylthioribulose-1-phosphate (MTRu-1-P) into 2,3-diketo-5-methylthiopentyl-1-phosphate (DK-MTP-1-P).</text>
</comment>
<comment type="catalytic activity">
    <reaction evidence="1">
        <text>5-(methylsulfanyl)-D-ribulose 1-phosphate = 5-methylsulfanyl-2,3-dioxopentyl phosphate + H2O</text>
        <dbReference type="Rhea" id="RHEA:15549"/>
        <dbReference type="ChEBI" id="CHEBI:15377"/>
        <dbReference type="ChEBI" id="CHEBI:58548"/>
        <dbReference type="ChEBI" id="CHEBI:58828"/>
        <dbReference type="EC" id="4.2.1.109"/>
    </reaction>
</comment>
<comment type="cofactor">
    <cofactor evidence="1">
        <name>Zn(2+)</name>
        <dbReference type="ChEBI" id="CHEBI:29105"/>
    </cofactor>
    <text evidence="1">Binds 1 zinc ion per subunit.</text>
</comment>
<comment type="pathway">
    <text evidence="1">Amino-acid biosynthesis; L-methionine biosynthesis via salvage pathway; L-methionine from S-methyl-5-thio-alpha-D-ribose 1-phosphate: step 2/6.</text>
</comment>
<comment type="similarity">
    <text evidence="1">Belongs to the aldolase class II family. MtnB subfamily.</text>
</comment>
<comment type="sequence caution" evidence="2">
    <conflict type="erroneous initiation">
        <sequence resource="EMBL-CDS" id="ABV40048"/>
    </conflict>
</comment>
<dbReference type="EC" id="4.2.1.109" evidence="1"/>
<dbReference type="EMBL" id="CP000826">
    <property type="protein sequence ID" value="ABV40048.1"/>
    <property type="status" value="ALT_INIT"/>
    <property type="molecule type" value="Genomic_DNA"/>
</dbReference>
<dbReference type="SMR" id="A8GAA8"/>
<dbReference type="STRING" id="399741.Spro_0942"/>
<dbReference type="KEGG" id="spe:Spro_0942"/>
<dbReference type="eggNOG" id="COG0235">
    <property type="taxonomic scope" value="Bacteria"/>
</dbReference>
<dbReference type="HOGENOM" id="CLU_006033_4_1_6"/>
<dbReference type="OrthoDB" id="9805559at2"/>
<dbReference type="UniPathway" id="UPA00904">
    <property type="reaction ID" value="UER00875"/>
</dbReference>
<dbReference type="GO" id="GO:0005737">
    <property type="term" value="C:cytoplasm"/>
    <property type="evidence" value="ECO:0007669"/>
    <property type="project" value="InterPro"/>
</dbReference>
<dbReference type="GO" id="GO:0046570">
    <property type="term" value="F:methylthioribulose 1-phosphate dehydratase activity"/>
    <property type="evidence" value="ECO:0007669"/>
    <property type="project" value="UniProtKB-UniRule"/>
</dbReference>
<dbReference type="GO" id="GO:0008270">
    <property type="term" value="F:zinc ion binding"/>
    <property type="evidence" value="ECO:0007669"/>
    <property type="project" value="UniProtKB-UniRule"/>
</dbReference>
<dbReference type="GO" id="GO:0019509">
    <property type="term" value="P:L-methionine salvage from methylthioadenosine"/>
    <property type="evidence" value="ECO:0007669"/>
    <property type="project" value="UniProtKB-UniRule"/>
</dbReference>
<dbReference type="GO" id="GO:0005996">
    <property type="term" value="P:monosaccharide metabolic process"/>
    <property type="evidence" value="ECO:0007669"/>
    <property type="project" value="UniProtKB-ARBA"/>
</dbReference>
<dbReference type="Gene3D" id="3.40.225.10">
    <property type="entry name" value="Class II aldolase/adducin N-terminal domain"/>
    <property type="match status" value="1"/>
</dbReference>
<dbReference type="HAMAP" id="MF_01677">
    <property type="entry name" value="Salvage_MtnB"/>
    <property type="match status" value="1"/>
</dbReference>
<dbReference type="InterPro" id="IPR001303">
    <property type="entry name" value="Aldolase_II/adducin_N"/>
</dbReference>
<dbReference type="InterPro" id="IPR036409">
    <property type="entry name" value="Aldolase_II/adducin_N_sf"/>
</dbReference>
<dbReference type="InterPro" id="IPR017714">
    <property type="entry name" value="MethylthioRu-1-P_deHdtase_MtnB"/>
</dbReference>
<dbReference type="NCBIfam" id="NF006672">
    <property type="entry name" value="PRK09220.1"/>
    <property type="match status" value="1"/>
</dbReference>
<dbReference type="NCBIfam" id="TIGR03328">
    <property type="entry name" value="salvage_mtnB"/>
    <property type="match status" value="1"/>
</dbReference>
<dbReference type="PANTHER" id="PTHR10640">
    <property type="entry name" value="METHYLTHIORIBULOSE-1-PHOSPHATE DEHYDRATASE"/>
    <property type="match status" value="1"/>
</dbReference>
<dbReference type="PANTHER" id="PTHR10640:SF7">
    <property type="entry name" value="METHYLTHIORIBULOSE-1-PHOSPHATE DEHYDRATASE"/>
    <property type="match status" value="1"/>
</dbReference>
<dbReference type="Pfam" id="PF00596">
    <property type="entry name" value="Aldolase_II"/>
    <property type="match status" value="1"/>
</dbReference>
<dbReference type="SMART" id="SM01007">
    <property type="entry name" value="Aldolase_II"/>
    <property type="match status" value="1"/>
</dbReference>
<dbReference type="SUPFAM" id="SSF53639">
    <property type="entry name" value="AraD/HMP-PK domain-like"/>
    <property type="match status" value="1"/>
</dbReference>